<organism>
    <name type="scientific">Escherichia coli (strain K12 / MC4100 / BW2952)</name>
    <dbReference type="NCBI Taxonomy" id="595496"/>
    <lineage>
        <taxon>Bacteria</taxon>
        <taxon>Pseudomonadati</taxon>
        <taxon>Pseudomonadota</taxon>
        <taxon>Gammaproteobacteria</taxon>
        <taxon>Enterobacterales</taxon>
        <taxon>Enterobacteriaceae</taxon>
        <taxon>Escherichia</taxon>
    </lineage>
</organism>
<reference key="1">
    <citation type="journal article" date="2009" name="J. Bacteriol.">
        <title>Genomic sequencing reveals regulatory mutations and recombinational events in the widely used MC4100 lineage of Escherichia coli K-12.</title>
        <authorList>
            <person name="Ferenci T."/>
            <person name="Zhou Z."/>
            <person name="Betteridge T."/>
            <person name="Ren Y."/>
            <person name="Liu Y."/>
            <person name="Feng L."/>
            <person name="Reeves P.R."/>
            <person name="Wang L."/>
        </authorList>
    </citation>
    <scope>NUCLEOTIDE SEQUENCE [LARGE SCALE GENOMIC DNA]</scope>
    <source>
        <strain>K12 / MC4100 / BW2952</strain>
    </source>
</reference>
<feature type="chain" id="PRO_1000215843" description="Allantoinase">
    <location>
        <begin position="1"/>
        <end position="453"/>
    </location>
</feature>
<feature type="binding site" evidence="1">
    <location>
        <position position="59"/>
    </location>
    <ligand>
        <name>Zn(2+)</name>
        <dbReference type="ChEBI" id="CHEBI:29105"/>
        <label>1</label>
    </ligand>
</feature>
<feature type="binding site" evidence="1">
    <location>
        <position position="61"/>
    </location>
    <ligand>
        <name>Zn(2+)</name>
        <dbReference type="ChEBI" id="CHEBI:29105"/>
        <label>1</label>
    </ligand>
</feature>
<feature type="binding site" description="via carbamate group" evidence="1">
    <location>
        <position position="146"/>
    </location>
    <ligand>
        <name>Zn(2+)</name>
        <dbReference type="ChEBI" id="CHEBI:29105"/>
        <label>1</label>
    </ligand>
</feature>
<feature type="binding site" description="via carbamate group" evidence="1">
    <location>
        <position position="146"/>
    </location>
    <ligand>
        <name>Zn(2+)</name>
        <dbReference type="ChEBI" id="CHEBI:29105"/>
        <label>2</label>
    </ligand>
</feature>
<feature type="binding site" evidence="1">
    <location>
        <position position="186"/>
    </location>
    <ligand>
        <name>Zn(2+)</name>
        <dbReference type="ChEBI" id="CHEBI:29105"/>
        <label>2</label>
    </ligand>
</feature>
<feature type="binding site" evidence="1">
    <location>
        <position position="242"/>
    </location>
    <ligand>
        <name>Zn(2+)</name>
        <dbReference type="ChEBI" id="CHEBI:29105"/>
        <label>2</label>
    </ligand>
</feature>
<feature type="binding site" evidence="1">
    <location>
        <position position="315"/>
    </location>
    <ligand>
        <name>Zn(2+)</name>
        <dbReference type="ChEBI" id="CHEBI:29105"/>
        <label>1</label>
    </ligand>
</feature>
<feature type="modified residue" description="N6-carboxylysine" evidence="1">
    <location>
        <position position="146"/>
    </location>
</feature>
<evidence type="ECO:0000255" key="1">
    <source>
        <dbReference type="HAMAP-Rule" id="MF_01645"/>
    </source>
</evidence>
<name>ALLB_ECOBW</name>
<protein>
    <recommendedName>
        <fullName evidence="1">Allantoinase</fullName>
        <ecNumber evidence="1">3.5.2.5</ecNumber>
    </recommendedName>
    <alternativeName>
        <fullName evidence="1">Allantoin-utilizing enzyme</fullName>
    </alternativeName>
</protein>
<comment type="function">
    <text evidence="1">Catalyzes the conversion of allantoin (5-ureidohydantoin) to allantoic acid by hydrolytic cleavage of the five-member hydantoin ring.</text>
</comment>
<comment type="catalytic activity">
    <reaction evidence="1">
        <text>(S)-allantoin + H2O = allantoate + H(+)</text>
        <dbReference type="Rhea" id="RHEA:17029"/>
        <dbReference type="ChEBI" id="CHEBI:15377"/>
        <dbReference type="ChEBI" id="CHEBI:15378"/>
        <dbReference type="ChEBI" id="CHEBI:15678"/>
        <dbReference type="ChEBI" id="CHEBI:17536"/>
        <dbReference type="EC" id="3.5.2.5"/>
    </reaction>
</comment>
<comment type="cofactor">
    <cofactor evidence="1">
        <name>Zn(2+)</name>
        <dbReference type="ChEBI" id="CHEBI:29105"/>
    </cofactor>
    <text evidence="1">Binds 2 Zn(2+) ions per subunit.</text>
</comment>
<comment type="pathway">
    <text evidence="1">Nitrogen metabolism; (S)-allantoin degradation; allantoate from (S)-allantoin: step 1/1.</text>
</comment>
<comment type="subunit">
    <text evidence="1">Homotetramer.</text>
</comment>
<comment type="PTM">
    <text evidence="1">Carboxylation allows a single lysine to coordinate two zinc ions.</text>
</comment>
<comment type="similarity">
    <text evidence="1">Belongs to the metallo-dependent hydrolases superfamily. Allantoinase family.</text>
</comment>
<accession>C4ZUW1</accession>
<keyword id="KW-0378">Hydrolase</keyword>
<keyword id="KW-0479">Metal-binding</keyword>
<keyword id="KW-0659">Purine metabolism</keyword>
<keyword id="KW-0862">Zinc</keyword>
<proteinExistence type="inferred from homology"/>
<gene>
    <name evidence="1" type="primary">allB</name>
    <name type="ordered locus">BWG_0388</name>
</gene>
<dbReference type="EC" id="3.5.2.5" evidence="1"/>
<dbReference type="EMBL" id="CP001396">
    <property type="protein sequence ID" value="ACR61962.1"/>
    <property type="molecule type" value="Genomic_DNA"/>
</dbReference>
<dbReference type="RefSeq" id="WP_000006900.1">
    <property type="nucleotide sequence ID" value="NC_012759.1"/>
</dbReference>
<dbReference type="SMR" id="C4ZUW1"/>
<dbReference type="KEGG" id="ebw:BWG_0388"/>
<dbReference type="HOGENOM" id="CLU_015572_4_2_6"/>
<dbReference type="UniPathway" id="UPA00395">
    <property type="reaction ID" value="UER00653"/>
</dbReference>
<dbReference type="GO" id="GO:0005737">
    <property type="term" value="C:cytoplasm"/>
    <property type="evidence" value="ECO:0007669"/>
    <property type="project" value="TreeGrafter"/>
</dbReference>
<dbReference type="GO" id="GO:0004038">
    <property type="term" value="F:allantoinase activity"/>
    <property type="evidence" value="ECO:0007669"/>
    <property type="project" value="UniProtKB-UniRule"/>
</dbReference>
<dbReference type="GO" id="GO:0050897">
    <property type="term" value="F:cobalt ion binding"/>
    <property type="evidence" value="ECO:0007669"/>
    <property type="project" value="InterPro"/>
</dbReference>
<dbReference type="GO" id="GO:0008270">
    <property type="term" value="F:zinc ion binding"/>
    <property type="evidence" value="ECO:0007669"/>
    <property type="project" value="InterPro"/>
</dbReference>
<dbReference type="GO" id="GO:0000256">
    <property type="term" value="P:allantoin catabolic process"/>
    <property type="evidence" value="ECO:0007669"/>
    <property type="project" value="UniProtKB-UniRule"/>
</dbReference>
<dbReference type="GO" id="GO:0006145">
    <property type="term" value="P:purine nucleobase catabolic process"/>
    <property type="evidence" value="ECO:0007669"/>
    <property type="project" value="TreeGrafter"/>
</dbReference>
<dbReference type="CDD" id="cd01315">
    <property type="entry name" value="L-HYD_ALN"/>
    <property type="match status" value="1"/>
</dbReference>
<dbReference type="FunFam" id="3.20.20.140:FF:000013">
    <property type="entry name" value="Allantoinase"/>
    <property type="match status" value="1"/>
</dbReference>
<dbReference type="Gene3D" id="3.20.20.140">
    <property type="entry name" value="Metal-dependent hydrolases"/>
    <property type="match status" value="1"/>
</dbReference>
<dbReference type="Gene3D" id="2.30.40.10">
    <property type="entry name" value="Urease, subunit C, domain 1"/>
    <property type="match status" value="1"/>
</dbReference>
<dbReference type="HAMAP" id="MF_01645">
    <property type="entry name" value="Hydantoinase"/>
    <property type="match status" value="1"/>
</dbReference>
<dbReference type="InterPro" id="IPR017593">
    <property type="entry name" value="Allantoinase"/>
</dbReference>
<dbReference type="InterPro" id="IPR047604">
    <property type="entry name" value="Allantoinase_bact"/>
</dbReference>
<dbReference type="InterPro" id="IPR006680">
    <property type="entry name" value="Amidohydro-rel"/>
</dbReference>
<dbReference type="InterPro" id="IPR050138">
    <property type="entry name" value="DHOase/Allantoinase_Hydrolase"/>
</dbReference>
<dbReference type="InterPro" id="IPR011059">
    <property type="entry name" value="Metal-dep_hydrolase_composite"/>
</dbReference>
<dbReference type="InterPro" id="IPR032466">
    <property type="entry name" value="Metal_Hydrolase"/>
</dbReference>
<dbReference type="NCBIfam" id="TIGR03178">
    <property type="entry name" value="allantoinase"/>
    <property type="match status" value="1"/>
</dbReference>
<dbReference type="NCBIfam" id="NF005960">
    <property type="entry name" value="PRK08044.1"/>
    <property type="match status" value="1"/>
</dbReference>
<dbReference type="PANTHER" id="PTHR43668">
    <property type="entry name" value="ALLANTOINASE"/>
    <property type="match status" value="1"/>
</dbReference>
<dbReference type="PANTHER" id="PTHR43668:SF4">
    <property type="entry name" value="ALLANTOINASE"/>
    <property type="match status" value="1"/>
</dbReference>
<dbReference type="Pfam" id="PF01979">
    <property type="entry name" value="Amidohydro_1"/>
    <property type="match status" value="1"/>
</dbReference>
<dbReference type="SUPFAM" id="SSF51338">
    <property type="entry name" value="Composite domain of metallo-dependent hydrolases"/>
    <property type="match status" value="1"/>
</dbReference>
<dbReference type="SUPFAM" id="SSF51556">
    <property type="entry name" value="Metallo-dependent hydrolases"/>
    <property type="match status" value="1"/>
</dbReference>
<sequence>MSFDLIIKNGTVILENEARVVDIAVKGGKIAAIGQDLGDAKEVMDASGLVVSPGMVDAHTHISEPGRSHWEGYETGTRAAAKGGITTMIEMPLNQLPATVDRASIELKFDAAKGKLTIDAAQLGGLVSYNIDRLHELDEVGVVGFKCFVATCGDRGIDNDFRDVNDWQFFKGAQKLGELGQPVLVHCENALICDELGEEAKREGRVTAHDYVASRPVFTEVEAIRRVLYLAKVAGCRLHVCHVSSPEGVEEVTRARQEGQDVTCESCPHYFVLDTDQFEEIGTLAKCSPPIRDLENQKGMWEKLFNGEIDCLVSDHSPCPPEMKAGNIMKAWGGIAGLQSCMDVMFDEAVQKRGMSLPMFGKLMATNAADIFGLQQKGRIAPGKDADFVFIQPNSSYVLTNDDLEYRHKVSPYVGRTIGARITKTILRGDVIYDIEQGFPVAPKGQFILKHQQ</sequence>